<accession>Q7A040</accession>
<name>HRTB_STAAW</name>
<gene>
    <name type="primary">hrtB</name>
    <name type="ordered locus">MW2281</name>
</gene>
<proteinExistence type="inferred from homology"/>
<dbReference type="EMBL" id="BA000033">
    <property type="protein sequence ID" value="BAB96146.1"/>
    <property type="molecule type" value="Genomic_DNA"/>
</dbReference>
<dbReference type="RefSeq" id="WP_000761395.1">
    <property type="nucleotide sequence ID" value="NC_003923.1"/>
</dbReference>
<dbReference type="SMR" id="Q7A040"/>
<dbReference type="KEGG" id="sam:MW2281"/>
<dbReference type="HOGENOM" id="CLU_060907_1_0_9"/>
<dbReference type="GO" id="GO:0005886">
    <property type="term" value="C:plasma membrane"/>
    <property type="evidence" value="ECO:0007669"/>
    <property type="project" value="UniProtKB-SubCell"/>
</dbReference>
<dbReference type="InterPro" id="IPR051125">
    <property type="entry name" value="ABC-4/HrtB_transporter"/>
</dbReference>
<dbReference type="InterPro" id="IPR003838">
    <property type="entry name" value="ABC3_permease_C"/>
</dbReference>
<dbReference type="PANTHER" id="PTHR43738">
    <property type="entry name" value="ABC TRANSPORTER, MEMBRANE PROTEIN"/>
    <property type="match status" value="1"/>
</dbReference>
<dbReference type="PANTHER" id="PTHR43738:SF1">
    <property type="entry name" value="HEMIN TRANSPORT SYSTEM PERMEASE PROTEIN HRTB-RELATED"/>
    <property type="match status" value="1"/>
</dbReference>
<dbReference type="Pfam" id="PF02687">
    <property type="entry name" value="FtsX"/>
    <property type="match status" value="1"/>
</dbReference>
<organism>
    <name type="scientific">Staphylococcus aureus (strain MW2)</name>
    <dbReference type="NCBI Taxonomy" id="196620"/>
    <lineage>
        <taxon>Bacteria</taxon>
        <taxon>Bacillati</taxon>
        <taxon>Bacillota</taxon>
        <taxon>Bacilli</taxon>
        <taxon>Bacillales</taxon>
        <taxon>Staphylococcaceae</taxon>
        <taxon>Staphylococcus</taxon>
    </lineage>
</organism>
<sequence length="351" mass="39482">MKLAIKEIMFYKFRYILITLIILLLSIMVLFISGLAQGLGRENISLFEHFDNDEYVVQKMKEPQIEKSQLSDTQQNQIKKVIHQEPYKMNIQTLKLSNKEQDVITMNDVKQQRIQLKKGDYPKNAHEVAINDKLAADNIRVGDRLHFKNNSTSYRVSGILNDTMYAHSSIVLLNDNGFNALNKVNTAFYPVKNLTQQQRDELNKINDVQVVSEKDLTGNIASYQAEQAPLNMMIVSLFAITAIVLSAFFYVMTIQKISQIGILKAIGIKTRHLLSALVLQILTLTIIGVGIAVIIIVGLSFMMPVTMPFYLTTQNILLMVGIFILVAILGASLSFIKLFKVDPIEAIGGAE</sequence>
<keyword id="KW-1003">Cell membrane</keyword>
<keyword id="KW-0472">Membrane</keyword>
<keyword id="KW-0812">Transmembrane</keyword>
<keyword id="KW-1133">Transmembrane helix</keyword>
<keyword id="KW-0813">Transport</keyword>
<reference key="1">
    <citation type="journal article" date="2002" name="Lancet">
        <title>Genome and virulence determinants of high virulence community-acquired MRSA.</title>
        <authorList>
            <person name="Baba T."/>
            <person name="Takeuchi F."/>
            <person name="Kuroda M."/>
            <person name="Yuzawa H."/>
            <person name="Aoki K."/>
            <person name="Oguchi A."/>
            <person name="Nagai Y."/>
            <person name="Iwama N."/>
            <person name="Asano K."/>
            <person name="Naimi T."/>
            <person name="Kuroda H."/>
            <person name="Cui L."/>
            <person name="Yamamoto K."/>
            <person name="Hiramatsu K."/>
        </authorList>
    </citation>
    <scope>NUCLEOTIDE SEQUENCE [LARGE SCALE GENOMIC DNA]</scope>
    <source>
        <strain>MW2</strain>
    </source>
</reference>
<feature type="chain" id="PRO_0000270528" description="Putative hemin transport system permease protein HrtB">
    <location>
        <begin position="1"/>
        <end position="351"/>
    </location>
</feature>
<feature type="transmembrane region" description="Helical" evidence="2">
    <location>
        <begin position="16"/>
        <end position="36"/>
    </location>
</feature>
<feature type="transmembrane region" description="Helical" evidence="2">
    <location>
        <begin position="234"/>
        <end position="254"/>
    </location>
</feature>
<feature type="transmembrane region" description="Helical" evidence="2">
    <location>
        <begin position="281"/>
        <end position="301"/>
    </location>
</feature>
<feature type="transmembrane region" description="Helical" evidence="2">
    <location>
        <begin position="316"/>
        <end position="336"/>
    </location>
</feature>
<evidence type="ECO:0000250" key="1"/>
<evidence type="ECO:0000255" key="2"/>
<evidence type="ECO:0000305" key="3"/>
<comment type="function">
    <text evidence="1">Part of the ABC transporter complex hrt involved in hemin import. Responsible for the translocation of the substrate across the membrane (By similarity).</text>
</comment>
<comment type="subunit">
    <text evidence="1">The complex is composed of two ATP-binding proteins (HrtA), two transmembrane proteins (HrtB) and a solute-binding protein.</text>
</comment>
<comment type="subcellular location">
    <subcellularLocation>
        <location evidence="3">Cell membrane</location>
        <topology evidence="3">Multi-pass membrane protein</topology>
    </subcellularLocation>
</comment>
<comment type="similarity">
    <text evidence="3">Belongs to the ABC-4 integral membrane protein family. HrtB subfamily.</text>
</comment>
<protein>
    <recommendedName>
        <fullName>Putative hemin transport system permease protein HrtB</fullName>
    </recommendedName>
</protein>